<name>TRM3_PSHV1</name>
<reference key="1">
    <citation type="journal article" date="2006" name="J. Virol.">
        <title>Psittacid herpesvirus 1 and infectious laryngotracheitis virus: Comparative genome sequence analysis of two avian alphaherpesviruses.</title>
        <authorList>
            <person name="Thureen D.R."/>
            <person name="Keeler C.L. Jr."/>
        </authorList>
    </citation>
    <scope>NUCLEOTIDE SEQUENCE [LARGE SCALE GENOMIC DNA]</scope>
</reference>
<proteinExistence type="inferred from homology"/>
<evidence type="ECO:0000255" key="1">
    <source>
        <dbReference type="HAMAP-Rule" id="MF_04013"/>
    </source>
</evidence>
<dbReference type="EC" id="3.1.-.-" evidence="1"/>
<dbReference type="EMBL" id="AY372243">
    <property type="protein sequence ID" value="AAQ73728.1"/>
    <property type="molecule type" value="Genomic_DNA"/>
</dbReference>
<dbReference type="SMR" id="Q6UDI2"/>
<dbReference type="Proteomes" id="UP000006840">
    <property type="component" value="Segment"/>
</dbReference>
<dbReference type="GO" id="GO:0042025">
    <property type="term" value="C:host cell nucleus"/>
    <property type="evidence" value="ECO:0007669"/>
    <property type="project" value="UniProtKB-SubCell"/>
</dbReference>
<dbReference type="GO" id="GO:0003677">
    <property type="term" value="F:DNA binding"/>
    <property type="evidence" value="ECO:0007669"/>
    <property type="project" value="UniProtKB-KW"/>
</dbReference>
<dbReference type="GO" id="GO:0016787">
    <property type="term" value="F:hydrolase activity"/>
    <property type="evidence" value="ECO:0007669"/>
    <property type="project" value="UniProtKB-KW"/>
</dbReference>
<dbReference type="GO" id="GO:0051276">
    <property type="term" value="P:chromosome organization"/>
    <property type="evidence" value="ECO:0007669"/>
    <property type="project" value="InterPro"/>
</dbReference>
<dbReference type="Gene3D" id="3.30.420.320">
    <property type="match status" value="1"/>
</dbReference>
<dbReference type="HAMAP" id="MF_04013">
    <property type="entry name" value="HSV_TRM3"/>
    <property type="match status" value="1"/>
</dbReference>
<dbReference type="InterPro" id="IPR003498">
    <property type="entry name" value="DNA_pack_C"/>
</dbReference>
<dbReference type="InterPro" id="IPR038435">
    <property type="entry name" value="DNA_pack_C_sf"/>
</dbReference>
<dbReference type="InterPro" id="IPR033663">
    <property type="entry name" value="HSV_TRM3"/>
</dbReference>
<dbReference type="Pfam" id="PF02499">
    <property type="entry name" value="DNA_pack_C"/>
    <property type="match status" value="1"/>
</dbReference>
<comment type="function">
    <text evidence="1">Component of the molecular motor that translocates viral genomic DNA in empty capsid during DNA packaging. Forms a tripartite terminase complex together with TRM1 and TRM2 in the host cytoplasm. Once the complex reaches the host nucleus, it interacts with the capsid portal vertex. This portal forms a ring in which genomic DNA is translocated into the capsid. TRM3 carries an RNase H-like nuclease activity that plays an important role for the cleavage of concatemeric viral DNA into unit length genomes.</text>
</comment>
<comment type="subunit">
    <text evidence="1">Interacts with the terminase subunits TRM1 and TRM2. Interacts with portal protein.</text>
</comment>
<comment type="subcellular location">
    <subcellularLocation>
        <location evidence="1">Host nucleus</location>
    </subcellularLocation>
    <text evidence="1">Responsible for the nuclear localization of the two others subunits TRM1 and TRM2.</text>
</comment>
<comment type="similarity">
    <text evidence="1">Belongs to the herpesviridae TRM3 protein family.</text>
</comment>
<feature type="chain" id="PRO_0000406822" description="Tripartite terminase subunit 3">
    <location>
        <begin position="1"/>
        <end position="506"/>
    </location>
</feature>
<feature type="active site" description="For ATPase activity" evidence="1">
    <location>
        <position position="128"/>
    </location>
</feature>
<feature type="active site" description="For nuclease activity" evidence="1">
    <location>
        <position position="282"/>
    </location>
</feature>
<feature type="active site" description="For nuclease activity" evidence="1">
    <location>
        <position position="354"/>
    </location>
</feature>
<feature type="active site" description="For nuclease activity" evidence="1">
    <location>
        <position position="475"/>
    </location>
</feature>
<accession>Q6UDI2</accession>
<protein>
    <recommendedName>
        <fullName evidence="1">Tripartite terminase subunit 3</fullName>
        <ecNumber evidence="1">3.1.-.-</ecNumber>
    </recommendedName>
    <alternativeName>
        <fullName evidence="1">Terminase large subunit</fullName>
    </alternativeName>
</protein>
<sequence>MHRSDSTMWLKYGLSPPTRSPNAALCAAAATKCASMTRPSCVLDSLTLYSPAWPCLCRYAIFPCRAWAIYVRAGNFILTKFSRFSFCFCVWSPRPPIAAAANHPATSTIVARSQGLRGQDFNFLFVDEANFIKPGAMHTIMGFLNQTNCKLFFVSSTNTGQSSTSLLYNLKGSSNSLLNVVTYICDDHLPEVQQRQNVTTCSCYVLQKPVYVTMDHSVRNTAELFVKDSFMNEIAGGQVGNTLSARSVIASRAMDQFLVYRPSTSNSPNVHNLSRVLTAYIDPAFTANRSASGTGIALVTELNGATVLLGMEHFYLEALTGEAAAEIAQCANLCVAYTCLLHPGVFREVRVAVEGNSSQDSATAIALRLADLLAPLQKRLGFSLVFAHTRQHGSSVAHPFYLLNKQKSRAFDLFISRFNSGNIMASQELVSNTVLLGNDPCEYLVEQIKNLEIVITSGDANRVYSGKQGGKLADDVLVAVVMAAYLSFEGAPPAGYHTVSGAVCRR</sequence>
<organismHost>
    <name type="scientific">Amazona oratrix</name>
    <name type="common">yellow-headed parrot</name>
    <dbReference type="NCBI Taxonomy" id="152276"/>
</organismHost>
<keyword id="KW-0238">DNA-binding</keyword>
<keyword id="KW-1048">Host nucleus</keyword>
<keyword id="KW-0378">Hydrolase</keyword>
<keyword id="KW-1185">Reference proteome</keyword>
<keyword id="KW-0231">Viral genome packaging</keyword>
<keyword id="KW-1188">Viral release from host cell</keyword>
<organism>
    <name type="scientific">Psittacid herpesvirus 1 (isolate Amazon parrot/-/97-0001/1997)</name>
    <name type="common">PsHV-1</name>
    <name type="synonym">Pacheco's disease virus</name>
    <dbReference type="NCBI Taxonomy" id="670426"/>
    <lineage>
        <taxon>Viruses</taxon>
        <taxon>Duplodnaviria</taxon>
        <taxon>Heunggongvirae</taxon>
        <taxon>Peploviricota</taxon>
        <taxon>Herviviricetes</taxon>
        <taxon>Herpesvirales</taxon>
        <taxon>Orthoherpesviridae</taxon>
        <taxon>Alphaherpesvirinae</taxon>
        <taxon>Iltovirus</taxon>
        <taxon>Iltovirus psittacidalpha1</taxon>
        <taxon>Psittacid alphaherpesvirus 1</taxon>
    </lineage>
</organism>
<gene>
    <name evidence="1" type="primary">TRM3</name>
    <name type="ordered locus">UL15</name>
</gene>